<comment type="function">
    <text evidence="1 6 7 8 9 10 12">Nuclear receptor that exhibits a ligand-dependent transcriptional activation activity (PubMed:18055760, PubMed:19520913, PubMed:20427281). Interaction with retinoic acid receptor (RXR) shifts RXR from its role as a silent DNA-binding partner to an active ligand-binding subunit in mediating retinoid responses through target genes defined by LXRES. LXRES are DR4-type response elements characterized by direct repeats of two similar hexanuclotide half-sites spaced by four nucleotides. Plays an important role in the regulation of cholesterol homeostasis, regulating cholesterol uptake through MYLIP-dependent ubiquitination of LDLR, VLDLR and LRP8. Interplays functionally with RORA for the regulation of genes involved in liver metabolism (By similarity). Induces LPCAT3-dependent phospholipid remodeling in endoplasmic reticulum (ER) membranes of hepatocytes, driving SREBF1 processing and lipogenesis (PubMed:25806685, PubMed:28846071). Via LPCAT3, triggers the incorporation of arachidonate into phosphatidylcholines of ER membranes, increasing membrane dynamics and enabling triacylglycerols transfer to nascent very low-density lipoprotein (VLDL) particles (PubMed:25806685). Via LPCAT3 also counteracts lipid-induced ER stress response and inflammation, likely by modulating SRC kinase membrane compartmentalization and limiting the synthesis of lipid inflammatory mediators (PubMed:24206663).</text>
</comment>
<comment type="subunit">
    <text evidence="1">Heterodimer of NR1H3 and RXR (retinoic acid receptor). Interacts with CCAR2 (via N-terminus) in a ligand-independent manner. Interacts with SIRT1 and this interaction is inhibited by CCAR2 (By similarity).</text>
</comment>
<comment type="interaction">
    <interactant intactId="EBI-5276764">
        <id>Q9Z0Y9</id>
    </interactant>
    <interactant intactId="EBI-3990176">
        <id>O88559</id>
        <label>Men1</label>
    </interactant>
    <organismsDiffer>false</organismsDiffer>
    <experiments>3</experiments>
</comment>
<comment type="interaction">
    <interactant intactId="EBI-5276764">
        <id>Q9Z0Y9</id>
    </interactant>
    <interactant intactId="EBI-1802965">
        <id>Q96EB6</id>
        <label>SIRT1</label>
    </interactant>
    <organismsDiffer>true</organismsDiffer>
    <experiments>2</experiments>
</comment>
<comment type="subcellular location">
    <subcellularLocation>
        <location evidence="3 11">Nucleus</location>
    </subcellularLocation>
    <subcellularLocation>
        <location evidence="11">Cytoplasm</location>
    </subcellularLocation>
</comment>
<comment type="PTM">
    <text evidence="1 11">Ubiquitinated (PubMed:27383786). Ubiquitination by UBR5 leads to its degradation: UBR5 specifically recognizes and binds ligand-bound NR1H3 when it is not associated with coactivators (NCOAs) (By similarity). In presence of NCOAs, the UBR5-degron is not accessible, preventing its ubiquitination and degradation (By similarity).</text>
</comment>
<comment type="similarity">
    <text evidence="13">Belongs to the nuclear hormone receptor family. NR1 subfamily.</text>
</comment>
<protein>
    <recommendedName>
        <fullName>Oxysterols receptor LXR-alpha</fullName>
    </recommendedName>
    <alternativeName>
        <fullName>Liver X receptor alpha</fullName>
    </alternativeName>
    <alternativeName>
        <fullName>Nuclear receptor subfamily 1 group H member 3</fullName>
    </alternativeName>
</protein>
<keyword id="KW-0002">3D-structure</keyword>
<keyword id="KW-0010">Activator</keyword>
<keyword id="KW-0963">Cytoplasm</keyword>
<keyword id="KW-0238">DNA-binding</keyword>
<keyword id="KW-0479">Metal-binding</keyword>
<keyword id="KW-0539">Nucleus</keyword>
<keyword id="KW-0597">Phosphoprotein</keyword>
<keyword id="KW-0675">Receptor</keyword>
<keyword id="KW-1185">Reference proteome</keyword>
<keyword id="KW-0804">Transcription</keyword>
<keyword id="KW-0805">Transcription regulation</keyword>
<keyword id="KW-0832">Ubl conjugation</keyword>
<keyword id="KW-0862">Zinc</keyword>
<keyword id="KW-0863">Zinc-finger</keyword>
<proteinExistence type="evidence at protein level"/>
<gene>
    <name type="primary">Nr1h3</name>
    <name type="synonym">Lxra</name>
</gene>
<reference key="1">
    <citation type="journal article" date="2000" name="Gene">
        <title>Structural characterisation of the mouse nuclear oxysterol receptor genes LXRalpha and LXRbeta.</title>
        <authorList>
            <person name="Alberti S."/>
            <person name="Steffensen K.R."/>
            <person name="Gustafsson J.-A."/>
        </authorList>
    </citation>
    <scope>NUCLEOTIDE SEQUENCE [GENOMIC DNA / MRNA]</scope>
    <source>
        <strain>129/SvJ</strain>
        <tissue>Liver</tissue>
    </source>
</reference>
<reference key="2">
    <citation type="journal article" date="2000" name="Proc. Natl. Acad. Sci. U.S.A.">
        <title>LXRalpha functions as a cAMP-responsive transcriptional regulator of gene expression.</title>
        <authorList>
            <person name="Tamura K."/>
            <person name="Chen Y.E."/>
            <person name="Horiuchi M."/>
            <person name="Chen Q."/>
            <person name="Daviet L."/>
            <person name="Yang Z."/>
            <person name="Lopez-Ilasaca M."/>
            <person name="Mu H."/>
            <person name="Pratt R.E."/>
            <person name="Dzau V.J."/>
        </authorList>
    </citation>
    <scope>NUCLEOTIDE SEQUENCE [MRNA]</scope>
</reference>
<reference key="3">
    <citation type="journal article" date="2009" name="PLoS Biol.">
        <title>Lineage-specific biology revealed by a finished genome assembly of the mouse.</title>
        <authorList>
            <person name="Church D.M."/>
            <person name="Goodstadt L."/>
            <person name="Hillier L.W."/>
            <person name="Zody M.C."/>
            <person name="Goldstein S."/>
            <person name="She X."/>
            <person name="Bult C.J."/>
            <person name="Agarwala R."/>
            <person name="Cherry J.L."/>
            <person name="DiCuccio M."/>
            <person name="Hlavina W."/>
            <person name="Kapustin Y."/>
            <person name="Meric P."/>
            <person name="Maglott D."/>
            <person name="Birtle Z."/>
            <person name="Marques A.C."/>
            <person name="Graves T."/>
            <person name="Zhou S."/>
            <person name="Teague B."/>
            <person name="Potamousis K."/>
            <person name="Churas C."/>
            <person name="Place M."/>
            <person name="Herschleb J."/>
            <person name="Runnheim R."/>
            <person name="Forrest D."/>
            <person name="Amos-Landgraf J."/>
            <person name="Schwartz D.C."/>
            <person name="Cheng Z."/>
            <person name="Lindblad-Toh K."/>
            <person name="Eichler E.E."/>
            <person name="Ponting C.P."/>
        </authorList>
    </citation>
    <scope>NUCLEOTIDE SEQUENCE [LARGE SCALE GENOMIC DNA]</scope>
    <source>
        <strain>C57BL/6J</strain>
    </source>
</reference>
<reference key="4">
    <citation type="journal article" date="2008" name="Mol. Pharmacol.">
        <title>Identification of oxysterol 7alpha-hydroxylase (Cyp7b1) as a novel retinoid-related orphan receptor alpha (RORalpha) (NR1F1) target gene and a functional cross-talk between RORalpha and liver X receptor (NR1H3).</title>
        <authorList>
            <person name="Wada T."/>
            <person name="Kang H.S."/>
            <person name="Angers M."/>
            <person name="Gong H."/>
            <person name="Bhatia S."/>
            <person name="Khadem S."/>
            <person name="Ren S."/>
            <person name="Ellis E."/>
            <person name="Strom S.C."/>
            <person name="Jetten A.M."/>
            <person name="Xie W."/>
        </authorList>
    </citation>
    <scope>FUNCTION IN METABOLISM REGULATION</scope>
</reference>
<reference key="5">
    <citation type="journal article" date="2009" name="Science">
        <title>LXR regulates cholesterol uptake through Idol-dependent ubiquitination of the LDL receptor.</title>
        <authorList>
            <person name="Zelcer N."/>
            <person name="Hong C."/>
            <person name="Boyadjian R."/>
            <person name="Tontonoz P."/>
        </authorList>
    </citation>
    <scope>FUNCTION</scope>
</reference>
<reference key="6">
    <citation type="journal article" date="2010" name="J. Biol. Chem.">
        <title>The E3 ubiquitin ligase IDOL induces the degradation of the low density lipoprotein receptor family members VLDLR and ApoER2.</title>
        <authorList>
            <person name="Hong C."/>
            <person name="Duit S."/>
            <person name="Jalonen P."/>
            <person name="Out R."/>
            <person name="Scheer L."/>
            <person name="Sorrentino V."/>
            <person name="Boyadjian R."/>
            <person name="Rodenburg K.W."/>
            <person name="Foley E."/>
            <person name="Korhonen L."/>
            <person name="Lindholm D."/>
            <person name="Nimpf J."/>
            <person name="van Berkel T.J."/>
            <person name="Tontonoz P."/>
            <person name="Zelcer N."/>
        </authorList>
    </citation>
    <scope>FUNCTION</scope>
</reference>
<reference key="7">
    <citation type="journal article" date="2013" name="Cell Metab.">
        <title>LXRs regulate ER stress and inflammation through dynamic modulation of membrane phospholipid composition.</title>
        <authorList>
            <person name="Rong X."/>
            <person name="Albert C.J."/>
            <person name="Hong C."/>
            <person name="Duerr M.A."/>
            <person name="Chamberlain B.T."/>
            <person name="Tarling E.J."/>
            <person name="Ito A."/>
            <person name="Gao J."/>
            <person name="Wang B."/>
            <person name="Edwards P.A."/>
            <person name="Jung M.E."/>
            <person name="Ford D.A."/>
            <person name="Tontonoz P."/>
        </authorList>
    </citation>
    <scope>FUNCTION</scope>
</reference>
<reference key="8">
    <citation type="journal article" date="2015" name="Elife">
        <title>Lpcat3-dependent production of arachidonoyl phospholipids is a key determinant of triglyceride secretion.</title>
        <authorList>
            <person name="Rong X."/>
            <person name="Wang B."/>
            <person name="Dunham M.M."/>
            <person name="Hedde P.N."/>
            <person name="Wong J.S."/>
            <person name="Gratton E."/>
            <person name="Young S.G."/>
            <person name="Ford D.A."/>
            <person name="Tontonoz P."/>
        </authorList>
    </citation>
    <scope>FUNCTION</scope>
</reference>
<reference key="9">
    <citation type="journal article" date="2016" name="Nature">
        <title>TTC39B deficiency stabilizes LXR reducing both atherosclerosis and steatohepatitis.</title>
        <authorList>
            <person name="Hsieh J."/>
            <person name="Koseki M."/>
            <person name="Molusky M.M."/>
            <person name="Yakushiji E."/>
            <person name="Ichi I."/>
            <person name="Westerterp M."/>
            <person name="Iqbal J."/>
            <person name="Chan R.B."/>
            <person name="Abramowicz S."/>
            <person name="Tascau L."/>
            <person name="Takiguchi S."/>
            <person name="Yamashita S."/>
            <person name="Welch C.L."/>
            <person name="Di Paolo G."/>
            <person name="Hussain M.M."/>
            <person name="Lefkowitch J.H."/>
            <person name="Rader D.J."/>
            <person name="Tall A.R."/>
        </authorList>
    </citation>
    <scope>SUBCELLULAR LOCATION</scope>
    <scope>UBIQUITINATION</scope>
</reference>
<reference key="10">
    <citation type="journal article" date="2017" name="J. Clin. Invest.">
        <title>ER phospholipid composition modulates lipogenesis during feeding and in obesity.</title>
        <authorList>
            <person name="Rong X."/>
            <person name="Wang B."/>
            <person name="Palladino E.N."/>
            <person name="de Aguiar Vallim T.Q."/>
            <person name="Ford D.A."/>
            <person name="Tontonoz P."/>
        </authorList>
    </citation>
    <scope>FUNCTION</scope>
</reference>
<reference evidence="14" key="11">
    <citation type="journal article" date="2005" name="J. Med. Chem.">
        <title>Discovery of substituted maleimides as liver X receptor agonists and determination of a ligand-bound crystal structure.</title>
        <authorList>
            <person name="Jaye M.C."/>
            <person name="Krawiec J.A."/>
            <person name="Campobasso N."/>
            <person name="Smallwood A."/>
            <person name="Qiu C."/>
            <person name="Lu Q."/>
            <person name="Kerrigan J.J."/>
            <person name="De Los Frailes Alvaro M."/>
            <person name="Laffitte B."/>
            <person name="Liu W.S."/>
            <person name="Marino J.P. Jr."/>
            <person name="Meyer C.R."/>
            <person name="Nichols J.A."/>
            <person name="Parks D.J."/>
            <person name="Perez P."/>
            <person name="Sarov-Blat L."/>
            <person name="Seepersaud S.D."/>
            <person name="Steplewski K.M."/>
            <person name="Thompson S.K."/>
            <person name="Wang P."/>
            <person name="Watson M.A."/>
            <person name="Webb C.L."/>
            <person name="Haigh D."/>
            <person name="Caravella J.A."/>
            <person name="Macphee C.H."/>
            <person name="Willson T.M."/>
            <person name="Collins J.L."/>
        </authorList>
    </citation>
    <scope>X-RAY CRYSTALLOGRAPHY (2.80 ANGSTROMS) OF 203-445</scope>
</reference>
<reference evidence="15" key="12">
    <citation type="journal article" date="2008" name="J. Med. Chem.">
        <title>Structure-guided design of N-phenyl tertiary amines as transrepression-selective liver X receptor modulators with anti-inflammatory activity.</title>
        <authorList>
            <person name="Chao E.Y."/>
            <person name="Caravella J.A."/>
            <person name="Watson M.A."/>
            <person name="Campobasso N."/>
            <person name="Ghisletti S."/>
            <person name="Billin A.N."/>
            <person name="Galardi C."/>
            <person name="Wang P."/>
            <person name="Laffitte B.A."/>
            <person name="Iannone M.A."/>
            <person name="Goodwin B.J."/>
            <person name="Nichols J.A."/>
            <person name="Parks D.J."/>
            <person name="Stewart E."/>
            <person name="Wiethe R.W."/>
            <person name="Williams S.P."/>
            <person name="Smallwood A."/>
            <person name="Pearce K.H."/>
            <person name="Glass C.K."/>
            <person name="Willson T.M."/>
            <person name="Zuercher W.J."/>
            <person name="Collins J.L."/>
        </authorList>
    </citation>
    <scope>X-RAY CRYSTALLOGRAPHY (2.36 ANGSTROMS) OF 200-445</scope>
</reference>
<reference evidence="16" key="13">
    <citation type="journal article" date="2009" name="Bioorg. Med. Chem. Lett.">
        <title>Synthesis and SAR of potent LXR agonists containing an indole pharmacophore.</title>
        <authorList>
            <person name="Washburn D.G."/>
            <person name="Hoang T.H."/>
            <person name="Campobasso N."/>
            <person name="Smallwood A."/>
            <person name="Parks D.J."/>
            <person name="Webb C.L."/>
            <person name="Frank K.A."/>
            <person name="Nord M."/>
            <person name="Duraiswami C."/>
            <person name="Evans C."/>
            <person name="Jaye M."/>
            <person name="Thompson S.K."/>
        </authorList>
    </citation>
    <scope>X-RAY CRYSTALLOGRAPHY (2.06 ANGSTROMS) OF 200-445</scope>
</reference>
<organism>
    <name type="scientific">Mus musculus</name>
    <name type="common">Mouse</name>
    <dbReference type="NCBI Taxonomy" id="10090"/>
    <lineage>
        <taxon>Eukaryota</taxon>
        <taxon>Metazoa</taxon>
        <taxon>Chordata</taxon>
        <taxon>Craniata</taxon>
        <taxon>Vertebrata</taxon>
        <taxon>Euteleostomi</taxon>
        <taxon>Mammalia</taxon>
        <taxon>Eutheria</taxon>
        <taxon>Euarchontoglires</taxon>
        <taxon>Glires</taxon>
        <taxon>Rodentia</taxon>
        <taxon>Myomorpha</taxon>
        <taxon>Muroidea</taxon>
        <taxon>Muridae</taxon>
        <taxon>Murinae</taxon>
        <taxon>Mus</taxon>
        <taxon>Mus</taxon>
    </lineage>
</organism>
<accession>Q9Z0Y9</accession>
<accession>Q9QUH7</accession>
<dbReference type="EMBL" id="AJ132599">
    <property type="protein sequence ID" value="CAB51952.1"/>
    <property type="molecule type" value="Genomic_DNA"/>
</dbReference>
<dbReference type="EMBL" id="AJ132600">
    <property type="protein sequence ID" value="CAB51952.1"/>
    <property type="status" value="JOINED"/>
    <property type="molecule type" value="Genomic_DNA"/>
</dbReference>
<dbReference type="EMBL" id="AJ132601">
    <property type="protein sequence ID" value="CAB51923.1"/>
    <property type="molecule type" value="mRNA"/>
</dbReference>
<dbReference type="EMBL" id="AF085745">
    <property type="protein sequence ID" value="AAD16050.1"/>
    <property type="molecule type" value="mRNA"/>
</dbReference>
<dbReference type="EMBL" id="AL691450">
    <property type="status" value="NOT_ANNOTATED_CDS"/>
    <property type="molecule type" value="Genomic_DNA"/>
</dbReference>
<dbReference type="CCDS" id="CCDS16426.1"/>
<dbReference type="RefSeq" id="NP_001171201.1">
    <property type="nucleotide sequence ID" value="NM_001177730.1"/>
</dbReference>
<dbReference type="RefSeq" id="NP_001342208.1">
    <property type="nucleotide sequence ID" value="NM_001355279.1"/>
</dbReference>
<dbReference type="RefSeq" id="NP_038867.2">
    <property type="nucleotide sequence ID" value="NM_013839.4"/>
</dbReference>
<dbReference type="RefSeq" id="XP_006499229.1">
    <property type="nucleotide sequence ID" value="XM_006499166.2"/>
</dbReference>
<dbReference type="RefSeq" id="XP_006499230.1">
    <property type="nucleotide sequence ID" value="XM_006499167.4"/>
</dbReference>
<dbReference type="RefSeq" id="XP_006499231.1">
    <property type="nucleotide sequence ID" value="XM_006499168.4"/>
</dbReference>
<dbReference type="RefSeq" id="XP_030105325.1">
    <property type="nucleotide sequence ID" value="XM_030249465.2"/>
</dbReference>
<dbReference type="PDB" id="2ACL">
    <property type="method" value="X-ray"/>
    <property type="resolution" value="2.80 A"/>
    <property type="chains" value="B/D/F/H=203-445"/>
</dbReference>
<dbReference type="PDB" id="3FAL">
    <property type="method" value="X-ray"/>
    <property type="resolution" value="2.36 A"/>
    <property type="chains" value="B/D=200-445"/>
</dbReference>
<dbReference type="PDB" id="3FC6">
    <property type="method" value="X-ray"/>
    <property type="resolution" value="2.06 A"/>
    <property type="chains" value="B/D=200-445"/>
</dbReference>
<dbReference type="PDBsum" id="2ACL"/>
<dbReference type="PDBsum" id="3FAL"/>
<dbReference type="PDBsum" id="3FC6"/>
<dbReference type="SMR" id="Q9Z0Y9"/>
<dbReference type="BioGRID" id="204449">
    <property type="interactions" value="8"/>
</dbReference>
<dbReference type="ComplexPortal" id="CPX-708">
    <property type="entry name" value="RXRalpha-LXRalpha nuclear hormone receptor complex"/>
</dbReference>
<dbReference type="ComplexPortal" id="CPX-717">
    <property type="entry name" value="RXRbeta-LXRalpha nuclear hormone receptor complex"/>
</dbReference>
<dbReference type="CORUM" id="Q9Z0Y9"/>
<dbReference type="DIP" id="DIP-62095N"/>
<dbReference type="FunCoup" id="Q9Z0Y9">
    <property type="interactions" value="1300"/>
</dbReference>
<dbReference type="IntAct" id="Q9Z0Y9">
    <property type="interactions" value="8"/>
</dbReference>
<dbReference type="MINT" id="Q9Z0Y9"/>
<dbReference type="STRING" id="10090.ENSMUSP00000106988"/>
<dbReference type="BindingDB" id="Q9Z0Y9"/>
<dbReference type="ChEMBL" id="CHEMBL2189152"/>
<dbReference type="GuidetoPHARMACOLOGY" id="602"/>
<dbReference type="GlyGen" id="Q9Z0Y9">
    <property type="glycosylation" value="1 site, 1 O-linked glycan (1 site)"/>
</dbReference>
<dbReference type="iPTMnet" id="Q9Z0Y9"/>
<dbReference type="PhosphoSitePlus" id="Q9Z0Y9"/>
<dbReference type="PaxDb" id="10090-ENSMUSP00000106988"/>
<dbReference type="ProteomicsDB" id="295518"/>
<dbReference type="Antibodypedia" id="13611">
    <property type="antibodies" value="576 antibodies from 39 providers"/>
</dbReference>
<dbReference type="DNASU" id="22259"/>
<dbReference type="Ensembl" id="ENSMUST00000002177.9">
    <property type="protein sequence ID" value="ENSMUSP00000002177.3"/>
    <property type="gene ID" value="ENSMUSG00000002108.11"/>
</dbReference>
<dbReference type="Ensembl" id="ENSMUST00000111354.2">
    <property type="protein sequence ID" value="ENSMUSP00000106986.2"/>
    <property type="gene ID" value="ENSMUSG00000002108.11"/>
</dbReference>
<dbReference type="Ensembl" id="ENSMUST00000111356.8">
    <property type="protein sequence ID" value="ENSMUSP00000106988.2"/>
    <property type="gene ID" value="ENSMUSG00000002108.11"/>
</dbReference>
<dbReference type="GeneID" id="22259"/>
<dbReference type="KEGG" id="mmu:22259"/>
<dbReference type="UCSC" id="uc008kvc.2">
    <property type="organism name" value="mouse"/>
</dbReference>
<dbReference type="AGR" id="MGI:1352462"/>
<dbReference type="CTD" id="10062"/>
<dbReference type="MGI" id="MGI:1352462">
    <property type="gene designation" value="Nr1h3"/>
</dbReference>
<dbReference type="VEuPathDB" id="HostDB:ENSMUSG00000002108"/>
<dbReference type="eggNOG" id="KOG3575">
    <property type="taxonomic scope" value="Eukaryota"/>
</dbReference>
<dbReference type="GeneTree" id="ENSGT00940000159068"/>
<dbReference type="HOGENOM" id="CLU_007368_12_4_1"/>
<dbReference type="InParanoid" id="Q9Z0Y9"/>
<dbReference type="OMA" id="PETTCAI"/>
<dbReference type="OrthoDB" id="5837785at2759"/>
<dbReference type="PhylomeDB" id="Q9Z0Y9"/>
<dbReference type="TreeFam" id="TF352167"/>
<dbReference type="Reactome" id="R-MMU-383280">
    <property type="pathway name" value="Nuclear Receptor transcription pathway"/>
</dbReference>
<dbReference type="Reactome" id="R-MMU-4090294">
    <property type="pathway name" value="SUMOylation of intracellular receptors"/>
</dbReference>
<dbReference type="Reactome" id="R-MMU-8866427">
    <property type="pathway name" value="VLDLR internalisation and degradation"/>
</dbReference>
<dbReference type="Reactome" id="R-MMU-9029569">
    <property type="pathway name" value="NR1H3 &amp; NR1H2 regulate gene expression linked to cholesterol transport and efflux"/>
</dbReference>
<dbReference type="Reactome" id="R-MMU-9623433">
    <property type="pathway name" value="NR1H2 &amp; NR1H3 regulate gene expression to control bile acid homeostasis"/>
</dbReference>
<dbReference type="BioGRID-ORCS" id="22259">
    <property type="hits" value="2 hits in 80 CRISPR screens"/>
</dbReference>
<dbReference type="EvolutionaryTrace" id="Q9Z0Y9"/>
<dbReference type="PRO" id="PR:Q9Z0Y9"/>
<dbReference type="Proteomes" id="UP000000589">
    <property type="component" value="Chromosome 2"/>
</dbReference>
<dbReference type="RNAct" id="Q9Z0Y9">
    <property type="molecule type" value="protein"/>
</dbReference>
<dbReference type="Bgee" id="ENSMUSG00000002108">
    <property type="expression patterns" value="Expressed in right kidney and 120 other cell types or tissues"/>
</dbReference>
<dbReference type="ExpressionAtlas" id="Q9Z0Y9">
    <property type="expression patterns" value="baseline and differential"/>
</dbReference>
<dbReference type="GO" id="GO:0000785">
    <property type="term" value="C:chromatin"/>
    <property type="evidence" value="ECO:0007669"/>
    <property type="project" value="Ensembl"/>
</dbReference>
<dbReference type="GO" id="GO:0005737">
    <property type="term" value="C:cytoplasm"/>
    <property type="evidence" value="ECO:0000314"/>
    <property type="project" value="UniProtKB"/>
</dbReference>
<dbReference type="GO" id="GO:0005829">
    <property type="term" value="C:cytosol"/>
    <property type="evidence" value="ECO:0007669"/>
    <property type="project" value="Ensembl"/>
</dbReference>
<dbReference type="GO" id="GO:0005654">
    <property type="term" value="C:nucleoplasm"/>
    <property type="evidence" value="ECO:0007669"/>
    <property type="project" value="Ensembl"/>
</dbReference>
<dbReference type="GO" id="GO:0005634">
    <property type="term" value="C:nucleus"/>
    <property type="evidence" value="ECO:0000314"/>
    <property type="project" value="MGI"/>
</dbReference>
<dbReference type="GO" id="GO:0043235">
    <property type="term" value="C:receptor complex"/>
    <property type="evidence" value="ECO:0007669"/>
    <property type="project" value="Ensembl"/>
</dbReference>
<dbReference type="GO" id="GO:0090575">
    <property type="term" value="C:RNA polymerase II transcription regulator complex"/>
    <property type="evidence" value="ECO:0000314"/>
    <property type="project" value="BHF-UCL"/>
</dbReference>
<dbReference type="GO" id="GO:0031490">
    <property type="term" value="F:chromatin DNA binding"/>
    <property type="evidence" value="ECO:0000315"/>
    <property type="project" value="MGI"/>
</dbReference>
<dbReference type="GO" id="GO:0001228">
    <property type="term" value="F:DNA-binding transcription activator activity, RNA polymerase II-specific"/>
    <property type="evidence" value="ECO:0000314"/>
    <property type="project" value="NTNU_SB"/>
</dbReference>
<dbReference type="GO" id="GO:0003700">
    <property type="term" value="F:DNA-binding transcription factor activity"/>
    <property type="evidence" value="ECO:0000314"/>
    <property type="project" value="MGI"/>
</dbReference>
<dbReference type="GO" id="GO:0004879">
    <property type="term" value="F:nuclear receptor activity"/>
    <property type="evidence" value="ECO:0000314"/>
    <property type="project" value="MGI"/>
</dbReference>
<dbReference type="GO" id="GO:0000978">
    <property type="term" value="F:RNA polymerase II cis-regulatory region sequence-specific DNA binding"/>
    <property type="evidence" value="ECO:0000314"/>
    <property type="project" value="NTNU_SB"/>
</dbReference>
<dbReference type="GO" id="GO:0032810">
    <property type="term" value="F:sterol response element binding"/>
    <property type="evidence" value="ECO:0007669"/>
    <property type="project" value="Ensembl"/>
</dbReference>
<dbReference type="GO" id="GO:0008270">
    <property type="term" value="F:zinc ion binding"/>
    <property type="evidence" value="ECO:0007669"/>
    <property type="project" value="UniProtKB-KW"/>
</dbReference>
<dbReference type="GO" id="GO:0043277">
    <property type="term" value="P:apoptotic cell clearance"/>
    <property type="evidence" value="ECO:0007669"/>
    <property type="project" value="Ensembl"/>
</dbReference>
<dbReference type="GO" id="GO:0071222">
    <property type="term" value="P:cellular response to lipopolysaccharide"/>
    <property type="evidence" value="ECO:0000314"/>
    <property type="project" value="BHF-UCL"/>
</dbReference>
<dbReference type="GO" id="GO:0042632">
    <property type="term" value="P:cholesterol homeostasis"/>
    <property type="evidence" value="ECO:0000315"/>
    <property type="project" value="UniProtKB"/>
</dbReference>
<dbReference type="GO" id="GO:0006633">
    <property type="term" value="P:fatty acid biosynthetic process"/>
    <property type="evidence" value="ECO:0000304"/>
    <property type="project" value="BHF-UCL"/>
</dbReference>
<dbReference type="GO" id="GO:0009755">
    <property type="term" value="P:hormone-mediated signaling pathway"/>
    <property type="evidence" value="ECO:0000266"/>
    <property type="project" value="ComplexPortal"/>
</dbReference>
<dbReference type="GO" id="GO:0055088">
    <property type="term" value="P:lipid homeostasis"/>
    <property type="evidence" value="ECO:0000315"/>
    <property type="project" value="BHF-UCL"/>
</dbReference>
<dbReference type="GO" id="GO:0006629">
    <property type="term" value="P:lipid metabolic process"/>
    <property type="evidence" value="ECO:0000314"/>
    <property type="project" value="MGI"/>
</dbReference>
<dbReference type="GO" id="GO:0042789">
    <property type="term" value="P:mRNA transcription by RNA polymerase II"/>
    <property type="evidence" value="ECO:0000266"/>
    <property type="project" value="ComplexPortal"/>
</dbReference>
<dbReference type="GO" id="GO:0010887">
    <property type="term" value="P:negative regulation of cholesterol storage"/>
    <property type="evidence" value="ECO:0000316"/>
    <property type="project" value="BHF-UCL"/>
</dbReference>
<dbReference type="GO" id="GO:0120163">
    <property type="term" value="P:negative regulation of cold-induced thermogenesis"/>
    <property type="evidence" value="ECO:0000316"/>
    <property type="project" value="YuBioLab"/>
</dbReference>
<dbReference type="GO" id="GO:0045892">
    <property type="term" value="P:negative regulation of DNA-templated transcription"/>
    <property type="evidence" value="ECO:0000315"/>
    <property type="project" value="MGI"/>
</dbReference>
<dbReference type="GO" id="GO:0050728">
    <property type="term" value="P:negative regulation of inflammatory response"/>
    <property type="evidence" value="ECO:0000314"/>
    <property type="project" value="BHF-UCL"/>
</dbReference>
<dbReference type="GO" id="GO:0032369">
    <property type="term" value="P:negative regulation of lipid transport"/>
    <property type="evidence" value="ECO:0007669"/>
    <property type="project" value="Ensembl"/>
</dbReference>
<dbReference type="GO" id="GO:0043031">
    <property type="term" value="P:negative regulation of macrophage activation"/>
    <property type="evidence" value="ECO:0000314"/>
    <property type="project" value="BHF-UCL"/>
</dbReference>
<dbReference type="GO" id="GO:0090188">
    <property type="term" value="P:negative regulation of pancreatic juice secretion"/>
    <property type="evidence" value="ECO:0000315"/>
    <property type="project" value="BHF-UCL"/>
</dbReference>
<dbReference type="GO" id="GO:0048550">
    <property type="term" value="P:negative regulation of pinocytosis"/>
    <property type="evidence" value="ECO:0007669"/>
    <property type="project" value="Ensembl"/>
</dbReference>
<dbReference type="GO" id="GO:0045861">
    <property type="term" value="P:negative regulation of proteolysis"/>
    <property type="evidence" value="ECO:0000315"/>
    <property type="project" value="BHF-UCL"/>
</dbReference>
<dbReference type="GO" id="GO:1903573">
    <property type="term" value="P:negative regulation of response to endoplasmic reticulum stress"/>
    <property type="evidence" value="ECO:0000314"/>
    <property type="project" value="UniProtKB"/>
</dbReference>
<dbReference type="GO" id="GO:0090341">
    <property type="term" value="P:negative regulation of secretion of lysosomal enzymes"/>
    <property type="evidence" value="ECO:0000315"/>
    <property type="project" value="BHF-UCL"/>
</dbReference>
<dbReference type="GO" id="GO:0000122">
    <property type="term" value="P:negative regulation of transcription by RNA polymerase II"/>
    <property type="evidence" value="ECO:0000314"/>
    <property type="project" value="BHF-UCL"/>
</dbReference>
<dbReference type="GO" id="GO:0036151">
    <property type="term" value="P:phosphatidylcholine acyl-chain remodeling"/>
    <property type="evidence" value="ECO:0000315"/>
    <property type="project" value="UniProtKB"/>
</dbReference>
<dbReference type="GO" id="GO:0010875">
    <property type="term" value="P:positive regulation of cholesterol efflux"/>
    <property type="evidence" value="ECO:0000314"/>
    <property type="project" value="BHF-UCL"/>
</dbReference>
<dbReference type="GO" id="GO:0045893">
    <property type="term" value="P:positive regulation of DNA-templated transcription"/>
    <property type="evidence" value="ECO:0000315"/>
    <property type="project" value="BHF-UCL"/>
</dbReference>
<dbReference type="GO" id="GO:0045723">
    <property type="term" value="P:positive regulation of fatty acid biosynthetic process"/>
    <property type="evidence" value="ECO:0007669"/>
    <property type="project" value="Ensembl"/>
</dbReference>
<dbReference type="GO" id="GO:0034145">
    <property type="term" value="P:positive regulation of toll-like receptor 4 signaling pathway"/>
    <property type="evidence" value="ECO:0007669"/>
    <property type="project" value="Ensembl"/>
</dbReference>
<dbReference type="GO" id="GO:0045944">
    <property type="term" value="P:positive regulation of transcription by RNA polymerase II"/>
    <property type="evidence" value="ECO:0000314"/>
    <property type="project" value="BHF-UCL"/>
</dbReference>
<dbReference type="GO" id="GO:0010867">
    <property type="term" value="P:positive regulation of triglyceride biosynthetic process"/>
    <property type="evidence" value="ECO:0007669"/>
    <property type="project" value="Ensembl"/>
</dbReference>
<dbReference type="GO" id="GO:0006355">
    <property type="term" value="P:regulation of DNA-templated transcription"/>
    <property type="evidence" value="ECO:0000314"/>
    <property type="project" value="MGI"/>
</dbReference>
<dbReference type="GO" id="GO:0032570">
    <property type="term" value="P:response to progesterone"/>
    <property type="evidence" value="ECO:0007669"/>
    <property type="project" value="Ensembl"/>
</dbReference>
<dbReference type="GO" id="GO:0055092">
    <property type="term" value="P:sterol homeostasis"/>
    <property type="evidence" value="ECO:0000315"/>
    <property type="project" value="BHF-UCL"/>
</dbReference>
<dbReference type="GO" id="GO:0070328">
    <property type="term" value="P:triglyceride homeostasis"/>
    <property type="evidence" value="ECO:0000315"/>
    <property type="project" value="BHF-UCL"/>
</dbReference>
<dbReference type="CDD" id="cd07160">
    <property type="entry name" value="NR_DBD_LXR"/>
    <property type="match status" value="1"/>
</dbReference>
<dbReference type="CDD" id="cd06954">
    <property type="entry name" value="NR_LBD_LXR"/>
    <property type="match status" value="1"/>
</dbReference>
<dbReference type="FunFam" id="1.10.565.10:FF:000014">
    <property type="entry name" value="Oxysterols receptor LXR-alpha isoform 1"/>
    <property type="match status" value="1"/>
</dbReference>
<dbReference type="FunFam" id="3.30.50.10:FF:000017">
    <property type="entry name" value="Oxysterols receptor LXR-alpha isoform 1"/>
    <property type="match status" value="1"/>
</dbReference>
<dbReference type="Gene3D" id="3.30.50.10">
    <property type="entry name" value="Erythroid Transcription Factor GATA-1, subunit A"/>
    <property type="match status" value="1"/>
</dbReference>
<dbReference type="Gene3D" id="1.10.565.10">
    <property type="entry name" value="Retinoid X Receptor"/>
    <property type="match status" value="1"/>
</dbReference>
<dbReference type="InterPro" id="IPR023257">
    <property type="entry name" value="Liver_X_rcpt"/>
</dbReference>
<dbReference type="InterPro" id="IPR035500">
    <property type="entry name" value="NHR-like_dom_sf"/>
</dbReference>
<dbReference type="InterPro" id="IPR000536">
    <property type="entry name" value="Nucl_hrmn_rcpt_lig-bd"/>
</dbReference>
<dbReference type="InterPro" id="IPR050234">
    <property type="entry name" value="Nuclear_hormone_rcpt_NR1"/>
</dbReference>
<dbReference type="InterPro" id="IPR001723">
    <property type="entry name" value="Nuclear_hrmn_rcpt"/>
</dbReference>
<dbReference type="InterPro" id="IPR001628">
    <property type="entry name" value="Znf_hrmn_rcpt"/>
</dbReference>
<dbReference type="InterPro" id="IPR013088">
    <property type="entry name" value="Znf_NHR/GATA"/>
</dbReference>
<dbReference type="PANTHER" id="PTHR24082">
    <property type="entry name" value="NUCLEAR HORMONE RECEPTOR"/>
    <property type="match status" value="1"/>
</dbReference>
<dbReference type="PANTHER" id="PTHR24082:SF259">
    <property type="entry name" value="OXYSTEROLS RECEPTOR LXR-ALPHA"/>
    <property type="match status" value="1"/>
</dbReference>
<dbReference type="Pfam" id="PF00104">
    <property type="entry name" value="Hormone_recep"/>
    <property type="match status" value="1"/>
</dbReference>
<dbReference type="Pfam" id="PF00105">
    <property type="entry name" value="zf-C4"/>
    <property type="match status" value="1"/>
</dbReference>
<dbReference type="PRINTS" id="PR02034">
    <property type="entry name" value="LIVERXRECPTR"/>
</dbReference>
<dbReference type="PRINTS" id="PR00398">
    <property type="entry name" value="STRDHORMONER"/>
</dbReference>
<dbReference type="PRINTS" id="PR00047">
    <property type="entry name" value="STROIDFINGER"/>
</dbReference>
<dbReference type="SMART" id="SM00430">
    <property type="entry name" value="HOLI"/>
    <property type="match status" value="1"/>
</dbReference>
<dbReference type="SMART" id="SM00399">
    <property type="entry name" value="ZnF_C4"/>
    <property type="match status" value="1"/>
</dbReference>
<dbReference type="SUPFAM" id="SSF57716">
    <property type="entry name" value="Glucocorticoid receptor-like (DNA-binding domain)"/>
    <property type="match status" value="1"/>
</dbReference>
<dbReference type="SUPFAM" id="SSF48508">
    <property type="entry name" value="Nuclear receptor ligand-binding domain"/>
    <property type="match status" value="1"/>
</dbReference>
<dbReference type="PROSITE" id="PS51843">
    <property type="entry name" value="NR_LBD"/>
    <property type="match status" value="1"/>
</dbReference>
<dbReference type="PROSITE" id="PS00031">
    <property type="entry name" value="NUCLEAR_REC_DBD_1"/>
    <property type="match status" value="1"/>
</dbReference>
<dbReference type="PROSITE" id="PS51030">
    <property type="entry name" value="NUCLEAR_REC_DBD_2"/>
    <property type="match status" value="1"/>
</dbReference>
<feature type="chain" id="PRO_0000053536" description="Oxysterols receptor LXR-alpha">
    <location>
        <begin position="1"/>
        <end position="445"/>
    </location>
</feature>
<feature type="domain" description="NR LBD" evidence="4">
    <location>
        <begin position="207"/>
        <end position="445"/>
    </location>
</feature>
<feature type="DNA-binding region" description="Nuclear receptor" evidence="3">
    <location>
        <begin position="93"/>
        <end position="168"/>
    </location>
</feature>
<feature type="zinc finger region" description="NR C4-type" evidence="3">
    <location>
        <begin position="96"/>
        <end position="116"/>
    </location>
</feature>
<feature type="zinc finger region" description="NR C4-type" evidence="3">
    <location>
        <begin position="132"/>
        <end position="156"/>
    </location>
</feature>
<feature type="region of interest" description="Transactivation AF-1; required for ligand-independent transactivation function" evidence="1">
    <location>
        <begin position="1"/>
        <end position="94"/>
    </location>
</feature>
<feature type="region of interest" description="Disordered" evidence="5">
    <location>
        <begin position="1"/>
        <end position="34"/>
    </location>
</feature>
<feature type="region of interest" description="Disordered" evidence="5">
    <location>
        <begin position="63"/>
        <end position="86"/>
    </location>
</feature>
<feature type="region of interest" description="Transactivation AF-2; required for ligand-dependent transactivation function; mediates interaction with CCAR2" evidence="1">
    <location>
        <begin position="203"/>
        <end position="445"/>
    </location>
</feature>
<feature type="modified residue" description="Phosphoserine" evidence="2">
    <location>
        <position position="191"/>
    </location>
</feature>
<feature type="sequence conflict" description="In Ref. 1; CAB51952/CAB51923." evidence="13" ref="1">
    <original>P</original>
    <variation>R</variation>
    <location>
        <position position="399"/>
    </location>
</feature>
<feature type="helix" evidence="17">
    <location>
        <begin position="206"/>
        <end position="227"/>
    </location>
</feature>
<feature type="helix" evidence="17">
    <location>
        <begin position="228"/>
        <end position="232"/>
    </location>
</feature>
<feature type="helix" evidence="17">
    <location>
        <begin position="245"/>
        <end position="272"/>
    </location>
</feature>
<feature type="turn" evidence="17">
    <location>
        <begin position="274"/>
        <end position="278"/>
    </location>
</feature>
<feature type="helix" evidence="17">
    <location>
        <begin position="281"/>
        <end position="301"/>
    </location>
</feature>
<feature type="turn" evidence="17">
    <location>
        <begin position="306"/>
        <end position="309"/>
    </location>
</feature>
<feature type="strand" evidence="17">
    <location>
        <begin position="310"/>
        <end position="313"/>
    </location>
</feature>
<feature type="turn" evidence="17">
    <location>
        <begin position="314"/>
        <end position="316"/>
    </location>
</feature>
<feature type="strand" evidence="17">
    <location>
        <begin position="317"/>
        <end position="319"/>
    </location>
</feature>
<feature type="helix" evidence="17">
    <location>
        <begin position="321"/>
        <end position="325"/>
    </location>
</feature>
<feature type="turn" evidence="17">
    <location>
        <begin position="326"/>
        <end position="328"/>
    </location>
</feature>
<feature type="helix" evidence="17">
    <location>
        <begin position="331"/>
        <end position="347"/>
    </location>
</feature>
<feature type="helix" evidence="17">
    <location>
        <begin position="351"/>
        <end position="362"/>
    </location>
</feature>
<feature type="helix" evidence="17">
    <location>
        <begin position="373"/>
        <end position="394"/>
    </location>
</feature>
<feature type="helix" evidence="17">
    <location>
        <begin position="401"/>
        <end position="428"/>
    </location>
</feature>
<feature type="helix" evidence="17">
    <location>
        <begin position="435"/>
        <end position="441"/>
    </location>
</feature>
<name>NR1H3_MOUSE</name>
<sequence>MSLWLEASMPDVSPDSATELWKTEPQDAGDQGGNTCILREEARMPQSTGVALGIGLESAEPTALLPRAETLPEPTELRPQKRKKGPAPKMLGNELCSVCGDKASGFHYNVLSCEGCKGFFRRSVIKGARYVCHSGGHCPMDTYMRRKCQECRLRKCRQAGMREECVLSEEQIRLKKLKRQEEEQAQATSVSPRVSSPPQVLPQLSPEQLGMIEKLVAAQQQCNRRSFSDRLRVTPWPIAPDPQSREARQQRFAHFTELAIVSVQEIVDFAKQLPGFLQLSREDQIALLKTSAIEVMLLETSRRYNPGSESITFLKDFSYNREDFAKAGLQVEFINPIFEFSRAMNELQLNDAEFALLIAISIFSADRPNVQDQLQVERLQHTYVEALHAYVSINHPHDPLMFPRMLMKLVSLRTLSSVHSEQVFALRLQDKKLPPLLSEIWDVHE</sequence>
<evidence type="ECO:0000250" key="1">
    <source>
        <dbReference type="UniProtKB" id="Q13133"/>
    </source>
</evidence>
<evidence type="ECO:0000250" key="2">
    <source>
        <dbReference type="UniProtKB" id="Q62685"/>
    </source>
</evidence>
<evidence type="ECO:0000255" key="3">
    <source>
        <dbReference type="PROSITE-ProRule" id="PRU00407"/>
    </source>
</evidence>
<evidence type="ECO:0000255" key="4">
    <source>
        <dbReference type="PROSITE-ProRule" id="PRU01189"/>
    </source>
</evidence>
<evidence type="ECO:0000256" key="5">
    <source>
        <dbReference type="SAM" id="MobiDB-lite"/>
    </source>
</evidence>
<evidence type="ECO:0000269" key="6">
    <source>
    </source>
</evidence>
<evidence type="ECO:0000269" key="7">
    <source>
    </source>
</evidence>
<evidence type="ECO:0000269" key="8">
    <source>
    </source>
</evidence>
<evidence type="ECO:0000269" key="9">
    <source>
    </source>
</evidence>
<evidence type="ECO:0000269" key="10">
    <source>
    </source>
</evidence>
<evidence type="ECO:0000269" key="11">
    <source>
    </source>
</evidence>
<evidence type="ECO:0000269" key="12">
    <source>
    </source>
</evidence>
<evidence type="ECO:0000305" key="13"/>
<evidence type="ECO:0007744" key="14">
    <source>
        <dbReference type="PDB" id="2ACL"/>
    </source>
</evidence>
<evidence type="ECO:0007744" key="15">
    <source>
        <dbReference type="PDB" id="3FAL"/>
    </source>
</evidence>
<evidence type="ECO:0007744" key="16">
    <source>
        <dbReference type="PDB" id="3FC6"/>
    </source>
</evidence>
<evidence type="ECO:0007829" key="17">
    <source>
        <dbReference type="PDB" id="3FC6"/>
    </source>
</evidence>